<evidence type="ECO:0000250" key="1">
    <source>
        <dbReference type="UniProtKB" id="A0A0H2XI99"/>
    </source>
</evidence>
<evidence type="ECO:0000250" key="2">
    <source>
        <dbReference type="UniProtKB" id="P0C046"/>
    </source>
</evidence>
<evidence type="ECO:0000255" key="3"/>
<evidence type="ECO:0000305" key="4">
    <source>
    </source>
</evidence>
<reference key="1">
    <citation type="journal article" date="2001" name="Lancet">
        <title>Whole genome sequencing of meticillin-resistant Staphylococcus aureus.</title>
        <authorList>
            <person name="Kuroda M."/>
            <person name="Ohta T."/>
            <person name="Uchiyama I."/>
            <person name="Baba T."/>
            <person name="Yuzawa H."/>
            <person name="Kobayashi I."/>
            <person name="Cui L."/>
            <person name="Oguchi A."/>
            <person name="Aoki K."/>
            <person name="Nagai Y."/>
            <person name="Lian J.-Q."/>
            <person name="Ito T."/>
            <person name="Kanamori M."/>
            <person name="Matsumaru H."/>
            <person name="Maruyama A."/>
            <person name="Murakami H."/>
            <person name="Hosoyama A."/>
            <person name="Mizutani-Ui Y."/>
            <person name="Takahashi N.K."/>
            <person name="Sawano T."/>
            <person name="Inoue R."/>
            <person name="Kaito C."/>
            <person name="Sekimizu K."/>
            <person name="Hirakawa H."/>
            <person name="Kuhara S."/>
            <person name="Goto S."/>
            <person name="Yabuzaki J."/>
            <person name="Kanehisa M."/>
            <person name="Yamashita A."/>
            <person name="Oshima K."/>
            <person name="Furuya K."/>
            <person name="Yoshino C."/>
            <person name="Shiba T."/>
            <person name="Hattori M."/>
            <person name="Ogasawara N."/>
            <person name="Hayashi H."/>
            <person name="Hiramatsu K."/>
        </authorList>
    </citation>
    <scope>NUCLEOTIDE SEQUENCE [LARGE SCALE GENOMIC DNA]</scope>
    <source>
        <strain>Mu50 / ATCC 700699</strain>
    </source>
</reference>
<reference key="2">
    <citation type="journal article" date="2014" name="PLoS ONE">
        <title>WXG100 protein superfamily consists of three subfamilies and exhibits an alpha-helical C-terminal conserved residue pattern.</title>
        <authorList>
            <person name="Poulsen C."/>
            <person name="Panjikar S."/>
            <person name="Holton S.J."/>
            <person name="Wilmanns M."/>
            <person name="Song Y.H."/>
        </authorList>
    </citation>
    <scope>DISCUSSION OF SEQUENCE</scope>
</reference>
<keyword id="KW-0175">Coiled coil</keyword>
<keyword id="KW-0964">Secreted</keyword>
<keyword id="KW-0843">Virulence</keyword>
<proteinExistence type="inferred from homology"/>
<organism>
    <name type="scientific">Staphylococcus aureus (strain Mu50 / ATCC 700699)</name>
    <dbReference type="NCBI Taxonomy" id="158878"/>
    <lineage>
        <taxon>Bacteria</taxon>
        <taxon>Bacillati</taxon>
        <taxon>Bacillota</taxon>
        <taxon>Bacilli</taxon>
        <taxon>Bacillales</taxon>
        <taxon>Staphylococcaceae</taxon>
        <taxon>Staphylococcus</taxon>
    </lineage>
</organism>
<sequence length="97" mass="11036">MAMIKMSPEEIRAKSQSYGQGSDQIRQILSDLTRAQGEIAANWEGQAFSRFEEQFQQLSPKVEKFAQLLEEIKQQLNSTADAVQEQDQQLSNNFGLQ</sequence>
<name>ESXA_STAAM</name>
<comment type="function">
    <text evidence="1 2">Virulence factor that is important for the establishment of infection in the host. EsxA is required for EsxB synthesis as well as secretion (By similarity). Modulates host cell apoptotic pathways and mediates together with EsxB the release of S.aureus from the host cell. By acting on apoptosis, plays a role in the modulation of dendritic cell-mediated immunity (By similarity).</text>
</comment>
<comment type="subcellular location">
    <subcellularLocation>
        <location evidence="2">Secreted</location>
    </subcellularLocation>
    <text evidence="2">Secreted via the ESAT-6 secretion system (Ess) / type VII secretion system (T7SS).</text>
</comment>
<comment type="similarity">
    <text evidence="4">Belongs to the WXG100 family. sagExaA-like subfamily.</text>
</comment>
<dbReference type="EMBL" id="BA000017">
    <property type="protein sequence ID" value="BAB56444.1"/>
    <property type="molecule type" value="Genomic_DNA"/>
</dbReference>
<dbReference type="RefSeq" id="WP_001240826.1">
    <property type="nucleotide sequence ID" value="NC_002758.2"/>
</dbReference>
<dbReference type="SMR" id="Q99WU4"/>
<dbReference type="GeneID" id="98344606"/>
<dbReference type="KEGG" id="sav:SAV0282"/>
<dbReference type="HOGENOM" id="CLU_158563_4_0_9"/>
<dbReference type="PhylomeDB" id="Q99WU4"/>
<dbReference type="EvolutionaryTrace" id="Q99WU4"/>
<dbReference type="Proteomes" id="UP000002481">
    <property type="component" value="Chromosome"/>
</dbReference>
<dbReference type="GO" id="GO:0005576">
    <property type="term" value="C:extracellular region"/>
    <property type="evidence" value="ECO:0007669"/>
    <property type="project" value="UniProtKB-SubCell"/>
</dbReference>
<dbReference type="Gene3D" id="1.10.287.1060">
    <property type="entry name" value="ESAT-6-like"/>
    <property type="match status" value="1"/>
</dbReference>
<dbReference type="InterPro" id="IPR036689">
    <property type="entry name" value="ESAT-6-like_sf"/>
</dbReference>
<dbReference type="InterPro" id="IPR010310">
    <property type="entry name" value="T7SS_ESAT-6-like"/>
</dbReference>
<dbReference type="NCBIfam" id="TIGR03930">
    <property type="entry name" value="WXG100_ESAT6"/>
    <property type="match status" value="1"/>
</dbReference>
<dbReference type="Pfam" id="PF06013">
    <property type="entry name" value="WXG100"/>
    <property type="match status" value="1"/>
</dbReference>
<dbReference type="SUPFAM" id="SSF140453">
    <property type="entry name" value="EsxAB dimer-like"/>
    <property type="match status" value="1"/>
</dbReference>
<protein>
    <recommendedName>
        <fullName evidence="2">Type VII secretion system extracellular protein A</fullName>
        <shortName evidence="2">Ess extracellular protein A</shortName>
    </recommendedName>
</protein>
<gene>
    <name evidence="2" type="primary">esxA</name>
    <name type="ordered locus">SAV0282</name>
</gene>
<accession>Q99WU4</accession>
<feature type="chain" id="PRO_0000167824" description="Type VII secretion system extracellular protein A">
    <location>
        <begin position="1"/>
        <end position="97"/>
    </location>
</feature>
<feature type="coiled-coil region" evidence="3">
    <location>
        <begin position="61"/>
        <end position="93"/>
    </location>
</feature>